<name>ATPA_LACLS</name>
<keyword id="KW-0066">ATP synthesis</keyword>
<keyword id="KW-0067">ATP-binding</keyword>
<keyword id="KW-1003">Cell membrane</keyword>
<keyword id="KW-0139">CF(1)</keyword>
<keyword id="KW-0375">Hydrogen ion transport</keyword>
<keyword id="KW-0406">Ion transport</keyword>
<keyword id="KW-0472">Membrane</keyword>
<keyword id="KW-0547">Nucleotide-binding</keyword>
<keyword id="KW-1278">Translocase</keyword>
<keyword id="KW-0813">Transport</keyword>
<proteinExistence type="inferred from homology"/>
<reference key="1">
    <citation type="journal article" date="2006" name="Proc. Natl. Acad. Sci. U.S.A.">
        <title>Comparative genomics of the lactic acid bacteria.</title>
        <authorList>
            <person name="Makarova K.S."/>
            <person name="Slesarev A."/>
            <person name="Wolf Y.I."/>
            <person name="Sorokin A."/>
            <person name="Mirkin B."/>
            <person name="Koonin E.V."/>
            <person name="Pavlov A."/>
            <person name="Pavlova N."/>
            <person name="Karamychev V."/>
            <person name="Polouchine N."/>
            <person name="Shakhova V."/>
            <person name="Grigoriev I."/>
            <person name="Lou Y."/>
            <person name="Rohksar D."/>
            <person name="Lucas S."/>
            <person name="Huang K."/>
            <person name="Goodstein D.M."/>
            <person name="Hawkins T."/>
            <person name="Plengvidhya V."/>
            <person name="Welker D."/>
            <person name="Hughes J."/>
            <person name="Goh Y."/>
            <person name="Benson A."/>
            <person name="Baldwin K."/>
            <person name="Lee J.-H."/>
            <person name="Diaz-Muniz I."/>
            <person name="Dosti B."/>
            <person name="Smeianov V."/>
            <person name="Wechter W."/>
            <person name="Barabote R."/>
            <person name="Lorca G."/>
            <person name="Altermann E."/>
            <person name="Barrangou R."/>
            <person name="Ganesan B."/>
            <person name="Xie Y."/>
            <person name="Rawsthorne H."/>
            <person name="Tamir D."/>
            <person name="Parker C."/>
            <person name="Breidt F."/>
            <person name="Broadbent J.R."/>
            <person name="Hutkins R."/>
            <person name="O'Sullivan D."/>
            <person name="Steele J."/>
            <person name="Unlu G."/>
            <person name="Saier M.H. Jr."/>
            <person name="Klaenhammer T."/>
            <person name="Richardson P."/>
            <person name="Kozyavkin S."/>
            <person name="Weimer B.C."/>
            <person name="Mills D.A."/>
        </authorList>
    </citation>
    <scope>NUCLEOTIDE SEQUENCE [LARGE SCALE GENOMIC DNA]</scope>
    <source>
        <strain>SK11</strain>
    </source>
</reference>
<feature type="chain" id="PRO_0000302661" description="ATP synthase subunit alpha">
    <location>
        <begin position="1"/>
        <end position="500"/>
    </location>
</feature>
<feature type="binding site" evidence="1">
    <location>
        <begin position="169"/>
        <end position="176"/>
    </location>
    <ligand>
        <name>ATP</name>
        <dbReference type="ChEBI" id="CHEBI:30616"/>
    </ligand>
</feature>
<feature type="site" description="Required for activity" evidence="1">
    <location>
        <position position="362"/>
    </location>
</feature>
<sequence>MAIKANEISSLIKKQIENFTPDFEVAETGVVTYVGDGIARAYGLENAMSGELVEFSNGVLGMAQNLDATDVGIIVLGDFLSIREGDTVKRTGKIMEIQVGEELIGRVVNPLGQPVDGLGELNTGKTRPVEAKAPGVMQRKSVSEPLQTGLKAIDALVPIGRGQRELIIGDRQTGKTSVAIDAILNQKGQDMICIYVAIGQKESTVRTQVETLRKLDAMDYTIVVTASASQPSPLLYIAPYAGAAMGEEFMYNGKHVLVVYDDLSKQAVAYRELSLLLRRPPGREAYPGDVFYLHSRLLERAAKLSDDLGGGSMTALPFIETQAGDISAYIATNVISITDGQIFLENDLFYSGVRPAIDAGSSVSRVGGAAQIKAMKKVAGTLRLDLASFRELEAFTQFGSDLDEATQAKLNRGRRTVEVLKQPLHKPLAVEKQVLILYALTHGHLDDVPVDDVLDFETKMFDFFDANYADLLNVITDTKDLPEEAKLDEAIKAFKNTTNY</sequence>
<evidence type="ECO:0000255" key="1">
    <source>
        <dbReference type="HAMAP-Rule" id="MF_01346"/>
    </source>
</evidence>
<gene>
    <name evidence="1" type="primary">atpA</name>
    <name type="ordered locus">LACR_1935</name>
</gene>
<accession>Q02XA3</accession>
<comment type="function">
    <text evidence="1">Produces ATP from ADP in the presence of a proton gradient across the membrane. The alpha chain is a regulatory subunit.</text>
</comment>
<comment type="catalytic activity">
    <reaction evidence="1">
        <text>ATP + H2O + 4 H(+)(in) = ADP + phosphate + 5 H(+)(out)</text>
        <dbReference type="Rhea" id="RHEA:57720"/>
        <dbReference type="ChEBI" id="CHEBI:15377"/>
        <dbReference type="ChEBI" id="CHEBI:15378"/>
        <dbReference type="ChEBI" id="CHEBI:30616"/>
        <dbReference type="ChEBI" id="CHEBI:43474"/>
        <dbReference type="ChEBI" id="CHEBI:456216"/>
        <dbReference type="EC" id="7.1.2.2"/>
    </reaction>
</comment>
<comment type="subunit">
    <text evidence="1">F-type ATPases have 2 components, CF(1) - the catalytic core - and CF(0) - the membrane proton channel. CF(1) has five subunits: alpha(3), beta(3), gamma(1), delta(1), epsilon(1). CF(0) has three main subunits: a(1), b(2) and c(9-12). The alpha and beta chains form an alternating ring which encloses part of the gamma chain. CF(1) is attached to CF(0) by a central stalk formed by the gamma and epsilon chains, while a peripheral stalk is formed by the delta and b chains.</text>
</comment>
<comment type="subcellular location">
    <subcellularLocation>
        <location evidence="1">Cell membrane</location>
        <topology evidence="1">Peripheral membrane protein</topology>
    </subcellularLocation>
</comment>
<comment type="similarity">
    <text evidence="1">Belongs to the ATPase alpha/beta chains family.</text>
</comment>
<protein>
    <recommendedName>
        <fullName evidence="1">ATP synthase subunit alpha</fullName>
        <ecNumber evidence="1">7.1.2.2</ecNumber>
    </recommendedName>
    <alternativeName>
        <fullName evidence="1">ATP synthase F1 sector subunit alpha</fullName>
    </alternativeName>
    <alternativeName>
        <fullName evidence="1">F-ATPase subunit alpha</fullName>
    </alternativeName>
</protein>
<dbReference type="EC" id="7.1.2.2" evidence="1"/>
<dbReference type="EMBL" id="CP000425">
    <property type="protein sequence ID" value="ABJ73419.1"/>
    <property type="molecule type" value="Genomic_DNA"/>
</dbReference>
<dbReference type="RefSeq" id="WP_011676767.1">
    <property type="nucleotide sequence ID" value="NC_008527.1"/>
</dbReference>
<dbReference type="SMR" id="Q02XA3"/>
<dbReference type="KEGG" id="llc:LACR_1935"/>
<dbReference type="HOGENOM" id="CLU_010091_2_1_9"/>
<dbReference type="Proteomes" id="UP000000240">
    <property type="component" value="Chromosome"/>
</dbReference>
<dbReference type="GO" id="GO:0005886">
    <property type="term" value="C:plasma membrane"/>
    <property type="evidence" value="ECO:0007669"/>
    <property type="project" value="UniProtKB-SubCell"/>
</dbReference>
<dbReference type="GO" id="GO:0045259">
    <property type="term" value="C:proton-transporting ATP synthase complex"/>
    <property type="evidence" value="ECO:0007669"/>
    <property type="project" value="UniProtKB-KW"/>
</dbReference>
<dbReference type="GO" id="GO:0043531">
    <property type="term" value="F:ADP binding"/>
    <property type="evidence" value="ECO:0007669"/>
    <property type="project" value="TreeGrafter"/>
</dbReference>
<dbReference type="GO" id="GO:0005524">
    <property type="term" value="F:ATP binding"/>
    <property type="evidence" value="ECO:0007669"/>
    <property type="project" value="UniProtKB-UniRule"/>
</dbReference>
<dbReference type="GO" id="GO:0046933">
    <property type="term" value="F:proton-transporting ATP synthase activity, rotational mechanism"/>
    <property type="evidence" value="ECO:0007669"/>
    <property type="project" value="UniProtKB-UniRule"/>
</dbReference>
<dbReference type="CDD" id="cd18113">
    <property type="entry name" value="ATP-synt_F1_alpha_C"/>
    <property type="match status" value="1"/>
</dbReference>
<dbReference type="CDD" id="cd18116">
    <property type="entry name" value="ATP-synt_F1_alpha_N"/>
    <property type="match status" value="1"/>
</dbReference>
<dbReference type="CDD" id="cd01132">
    <property type="entry name" value="F1-ATPase_alpha_CD"/>
    <property type="match status" value="1"/>
</dbReference>
<dbReference type="FunFam" id="1.20.150.20:FF:000001">
    <property type="entry name" value="ATP synthase subunit alpha"/>
    <property type="match status" value="1"/>
</dbReference>
<dbReference type="FunFam" id="2.40.30.20:FF:000001">
    <property type="entry name" value="ATP synthase subunit alpha"/>
    <property type="match status" value="1"/>
</dbReference>
<dbReference type="FunFam" id="3.40.50.300:FF:000002">
    <property type="entry name" value="ATP synthase subunit alpha"/>
    <property type="match status" value="1"/>
</dbReference>
<dbReference type="Gene3D" id="2.40.30.20">
    <property type="match status" value="1"/>
</dbReference>
<dbReference type="Gene3D" id="1.20.150.20">
    <property type="entry name" value="ATP synthase alpha/beta chain, C-terminal domain"/>
    <property type="match status" value="1"/>
</dbReference>
<dbReference type="Gene3D" id="3.40.50.300">
    <property type="entry name" value="P-loop containing nucleotide triphosphate hydrolases"/>
    <property type="match status" value="1"/>
</dbReference>
<dbReference type="HAMAP" id="MF_01346">
    <property type="entry name" value="ATP_synth_alpha_bact"/>
    <property type="match status" value="1"/>
</dbReference>
<dbReference type="InterPro" id="IPR023366">
    <property type="entry name" value="ATP_synth_asu-like_sf"/>
</dbReference>
<dbReference type="InterPro" id="IPR000793">
    <property type="entry name" value="ATP_synth_asu_C"/>
</dbReference>
<dbReference type="InterPro" id="IPR038376">
    <property type="entry name" value="ATP_synth_asu_C_sf"/>
</dbReference>
<dbReference type="InterPro" id="IPR033732">
    <property type="entry name" value="ATP_synth_F1_a_nt-bd_dom"/>
</dbReference>
<dbReference type="InterPro" id="IPR005294">
    <property type="entry name" value="ATP_synth_F1_asu"/>
</dbReference>
<dbReference type="InterPro" id="IPR004100">
    <property type="entry name" value="ATPase_F1/V1/A1_a/bsu_N"/>
</dbReference>
<dbReference type="InterPro" id="IPR036121">
    <property type="entry name" value="ATPase_F1/V1/A1_a/bsu_N_sf"/>
</dbReference>
<dbReference type="InterPro" id="IPR000194">
    <property type="entry name" value="ATPase_F1/V1/A1_a/bsu_nucl-bd"/>
</dbReference>
<dbReference type="InterPro" id="IPR027417">
    <property type="entry name" value="P-loop_NTPase"/>
</dbReference>
<dbReference type="NCBIfam" id="TIGR00962">
    <property type="entry name" value="atpA"/>
    <property type="match status" value="1"/>
</dbReference>
<dbReference type="NCBIfam" id="NF009884">
    <property type="entry name" value="PRK13343.1"/>
    <property type="match status" value="1"/>
</dbReference>
<dbReference type="PANTHER" id="PTHR48082">
    <property type="entry name" value="ATP SYNTHASE SUBUNIT ALPHA, MITOCHONDRIAL"/>
    <property type="match status" value="1"/>
</dbReference>
<dbReference type="PANTHER" id="PTHR48082:SF2">
    <property type="entry name" value="ATP SYNTHASE SUBUNIT ALPHA, MITOCHONDRIAL"/>
    <property type="match status" value="1"/>
</dbReference>
<dbReference type="Pfam" id="PF00006">
    <property type="entry name" value="ATP-synt_ab"/>
    <property type="match status" value="1"/>
</dbReference>
<dbReference type="Pfam" id="PF00306">
    <property type="entry name" value="ATP-synt_ab_C"/>
    <property type="match status" value="1"/>
</dbReference>
<dbReference type="Pfam" id="PF02874">
    <property type="entry name" value="ATP-synt_ab_N"/>
    <property type="match status" value="1"/>
</dbReference>
<dbReference type="PIRSF" id="PIRSF039088">
    <property type="entry name" value="F_ATPase_subunit_alpha"/>
    <property type="match status" value="1"/>
</dbReference>
<dbReference type="SUPFAM" id="SSF47917">
    <property type="entry name" value="C-terminal domain of alpha and beta subunits of F1 ATP synthase"/>
    <property type="match status" value="1"/>
</dbReference>
<dbReference type="SUPFAM" id="SSF50615">
    <property type="entry name" value="N-terminal domain of alpha and beta subunits of F1 ATP synthase"/>
    <property type="match status" value="1"/>
</dbReference>
<dbReference type="SUPFAM" id="SSF52540">
    <property type="entry name" value="P-loop containing nucleoside triphosphate hydrolases"/>
    <property type="match status" value="1"/>
</dbReference>
<organism>
    <name type="scientific">Lactococcus lactis subsp. cremoris (strain SK11)</name>
    <dbReference type="NCBI Taxonomy" id="272622"/>
    <lineage>
        <taxon>Bacteria</taxon>
        <taxon>Bacillati</taxon>
        <taxon>Bacillota</taxon>
        <taxon>Bacilli</taxon>
        <taxon>Lactobacillales</taxon>
        <taxon>Streptococcaceae</taxon>
        <taxon>Lactococcus</taxon>
        <taxon>Lactococcus cremoris subsp. cremoris</taxon>
    </lineage>
</organism>